<reference key="1">
    <citation type="submission" date="2008-10" db="EMBL/GenBank/DDBJ databases">
        <title>Genome sequence of Bacillus cereus AH187.</title>
        <authorList>
            <person name="Dodson R.J."/>
            <person name="Durkin A.S."/>
            <person name="Rosovitz M.J."/>
            <person name="Rasko D.A."/>
            <person name="Kolsto A.B."/>
            <person name="Okstad O.A."/>
            <person name="Ravel J."/>
            <person name="Sutton G."/>
        </authorList>
    </citation>
    <scope>NUCLEOTIDE SEQUENCE [LARGE SCALE GENOMIC DNA]</scope>
    <source>
        <strain>AH187</strain>
    </source>
</reference>
<proteinExistence type="inferred from homology"/>
<organism>
    <name type="scientific">Bacillus cereus (strain AH187)</name>
    <dbReference type="NCBI Taxonomy" id="405534"/>
    <lineage>
        <taxon>Bacteria</taxon>
        <taxon>Bacillati</taxon>
        <taxon>Bacillota</taxon>
        <taxon>Bacilli</taxon>
        <taxon>Bacillales</taxon>
        <taxon>Bacillaceae</taxon>
        <taxon>Bacillus</taxon>
        <taxon>Bacillus cereus group</taxon>
    </lineage>
</organism>
<sequence length="157" mass="17924">MGFPKVERLLINYKTLDEFKKFKGCGAQELSMLEELQANIIENNSESPFYGIYYGGSLIARMSLYMKRNGGEPFEITGTYLELYKLEVLPTFQKQGFGEMLVNYAKGLQFPIKTIARIHSAGFWDKLNFQPVSVPDGDFYVWHPETNLNAVTNEESA</sequence>
<protein>
    <recommendedName>
        <fullName evidence="1">Uncharacterized N-acetyltransferase BCAH187_A3974</fullName>
        <ecNumber evidence="1">2.3.1.-</ecNumber>
    </recommendedName>
</protein>
<dbReference type="EC" id="2.3.1.-" evidence="1"/>
<dbReference type="EMBL" id="CP001177">
    <property type="protein sequence ID" value="ACJ81115.1"/>
    <property type="molecule type" value="Genomic_DNA"/>
</dbReference>
<dbReference type="SMR" id="B7HM42"/>
<dbReference type="KEGG" id="bcr:BCAH187_A3974"/>
<dbReference type="HOGENOM" id="CLU_136634_0_0_9"/>
<dbReference type="Proteomes" id="UP000002214">
    <property type="component" value="Chromosome"/>
</dbReference>
<dbReference type="GO" id="GO:0016747">
    <property type="term" value="F:acyltransferase activity, transferring groups other than amino-acyl groups"/>
    <property type="evidence" value="ECO:0007669"/>
    <property type="project" value="UniProtKB-UniRule"/>
</dbReference>
<dbReference type="CDD" id="cd04301">
    <property type="entry name" value="NAT_SF"/>
    <property type="match status" value="1"/>
</dbReference>
<dbReference type="Gene3D" id="3.40.630.30">
    <property type="match status" value="1"/>
</dbReference>
<dbReference type="HAMAP" id="MF_00824">
    <property type="entry name" value="Acetyltransf_YlbP"/>
    <property type="match status" value="1"/>
</dbReference>
<dbReference type="InterPro" id="IPR016181">
    <property type="entry name" value="Acyl_CoA_acyltransferase"/>
</dbReference>
<dbReference type="InterPro" id="IPR000182">
    <property type="entry name" value="GNAT_dom"/>
</dbReference>
<dbReference type="InterPro" id="IPR017274">
    <property type="entry name" value="YlbP"/>
</dbReference>
<dbReference type="NCBIfam" id="NF010241">
    <property type="entry name" value="PRK13688.1"/>
    <property type="match status" value="1"/>
</dbReference>
<dbReference type="Pfam" id="PF00583">
    <property type="entry name" value="Acetyltransf_1"/>
    <property type="match status" value="1"/>
</dbReference>
<dbReference type="PIRSF" id="PIRSF037732">
    <property type="entry name" value="YlbP_prd"/>
    <property type="match status" value="1"/>
</dbReference>
<dbReference type="SUPFAM" id="SSF55729">
    <property type="entry name" value="Acyl-CoA N-acyltransferases (Nat)"/>
    <property type="match status" value="1"/>
</dbReference>
<name>Y3974_BACC7</name>
<feature type="chain" id="PRO_1000191220" description="Uncharacterized N-acetyltransferase BCAH187_A3974">
    <location>
        <begin position="1"/>
        <end position="157"/>
    </location>
</feature>
<feature type="domain" description="N-acetyltransferase" evidence="1">
    <location>
        <begin position="9"/>
        <end position="146"/>
    </location>
</feature>
<keyword id="KW-0012">Acyltransferase</keyword>
<keyword id="KW-0808">Transferase</keyword>
<evidence type="ECO:0000255" key="1">
    <source>
        <dbReference type="HAMAP-Rule" id="MF_00824"/>
    </source>
</evidence>
<gene>
    <name type="ordered locus">BCAH187_A3974</name>
</gene>
<accession>B7HM42</accession>